<organism>
    <name type="scientific">Geotalea uraniireducens (strain Rf4)</name>
    <name type="common">Geobacter uraniireducens</name>
    <dbReference type="NCBI Taxonomy" id="351605"/>
    <lineage>
        <taxon>Bacteria</taxon>
        <taxon>Pseudomonadati</taxon>
        <taxon>Thermodesulfobacteriota</taxon>
        <taxon>Desulfuromonadia</taxon>
        <taxon>Geobacterales</taxon>
        <taxon>Geobacteraceae</taxon>
        <taxon>Geotalea</taxon>
    </lineage>
</organism>
<dbReference type="EC" id="3.1.21.7" evidence="1"/>
<dbReference type="EMBL" id="CP000698">
    <property type="protein sequence ID" value="ABQ24477.1"/>
    <property type="molecule type" value="Genomic_DNA"/>
</dbReference>
<dbReference type="RefSeq" id="WP_011937204.1">
    <property type="nucleotide sequence ID" value="NC_009483.1"/>
</dbReference>
<dbReference type="SMR" id="A5GD74"/>
<dbReference type="STRING" id="351605.Gura_0261"/>
<dbReference type="KEGG" id="gur:Gura_0261"/>
<dbReference type="HOGENOM" id="CLU_047631_1_1_7"/>
<dbReference type="Proteomes" id="UP000006695">
    <property type="component" value="Chromosome"/>
</dbReference>
<dbReference type="GO" id="GO:0005737">
    <property type="term" value="C:cytoplasm"/>
    <property type="evidence" value="ECO:0007669"/>
    <property type="project" value="UniProtKB-SubCell"/>
</dbReference>
<dbReference type="GO" id="GO:0043737">
    <property type="term" value="F:deoxyribonuclease V activity"/>
    <property type="evidence" value="ECO:0007669"/>
    <property type="project" value="UniProtKB-UniRule"/>
</dbReference>
<dbReference type="GO" id="GO:0000287">
    <property type="term" value="F:magnesium ion binding"/>
    <property type="evidence" value="ECO:0007669"/>
    <property type="project" value="UniProtKB-UniRule"/>
</dbReference>
<dbReference type="GO" id="GO:0016891">
    <property type="term" value="F:RNA endonuclease activity, producing 5'-phosphomonoesters"/>
    <property type="evidence" value="ECO:0007669"/>
    <property type="project" value="TreeGrafter"/>
</dbReference>
<dbReference type="GO" id="GO:0003727">
    <property type="term" value="F:single-stranded RNA binding"/>
    <property type="evidence" value="ECO:0007669"/>
    <property type="project" value="TreeGrafter"/>
</dbReference>
<dbReference type="GO" id="GO:0006281">
    <property type="term" value="P:DNA repair"/>
    <property type="evidence" value="ECO:0007669"/>
    <property type="project" value="UniProtKB-UniRule"/>
</dbReference>
<dbReference type="CDD" id="cd06559">
    <property type="entry name" value="Endonuclease_V"/>
    <property type="match status" value="1"/>
</dbReference>
<dbReference type="Gene3D" id="3.30.2170.10">
    <property type="entry name" value="archaeoglobus fulgidus dsm 4304 superfamily"/>
    <property type="match status" value="1"/>
</dbReference>
<dbReference type="HAMAP" id="MF_00801">
    <property type="entry name" value="Endonuclease_5"/>
    <property type="match status" value="1"/>
</dbReference>
<dbReference type="InterPro" id="IPR007581">
    <property type="entry name" value="Endonuclease-V"/>
</dbReference>
<dbReference type="PANTHER" id="PTHR28511">
    <property type="entry name" value="ENDONUCLEASE V"/>
    <property type="match status" value="1"/>
</dbReference>
<dbReference type="PANTHER" id="PTHR28511:SF1">
    <property type="entry name" value="ENDONUCLEASE V"/>
    <property type="match status" value="1"/>
</dbReference>
<dbReference type="Pfam" id="PF04493">
    <property type="entry name" value="Endonuclease_5"/>
    <property type="match status" value="1"/>
</dbReference>
<keyword id="KW-0963">Cytoplasm</keyword>
<keyword id="KW-0227">DNA damage</keyword>
<keyword id="KW-0234">DNA repair</keyword>
<keyword id="KW-0255">Endonuclease</keyword>
<keyword id="KW-0378">Hydrolase</keyword>
<keyword id="KW-0460">Magnesium</keyword>
<keyword id="KW-0479">Metal-binding</keyword>
<keyword id="KW-0540">Nuclease</keyword>
<keyword id="KW-1185">Reference proteome</keyword>
<protein>
    <recommendedName>
        <fullName evidence="1">Endonuclease V</fullName>
        <ecNumber evidence="1">3.1.21.7</ecNumber>
    </recommendedName>
    <alternativeName>
        <fullName evidence="1">Deoxyinosine 3'endonuclease</fullName>
    </alternativeName>
    <alternativeName>
        <fullName evidence="1">Deoxyribonuclease V</fullName>
        <shortName evidence="1">DNase V</shortName>
    </alternativeName>
</protein>
<gene>
    <name evidence="1" type="primary">nfi</name>
    <name type="ordered locus">Gura_0261</name>
</gene>
<accession>A5GD74</accession>
<evidence type="ECO:0000255" key="1">
    <source>
        <dbReference type="HAMAP-Rule" id="MF_00801"/>
    </source>
</evidence>
<sequence>MPPIEPHVCPDLKELRRHQETLAQSVRLEPLQGQPETVAGVDAAYAGEEIVAVAVLFDLATLTPVARSFVVARPALPYIPGFLSFREGPHLAEAVRRLSKRPDLLIVDGQGIAHLKRFGLACHLGVELGIPAIGCAKSRLVGEYVEPAAERGSRTLLLDRKEAVGAVLRTRSNVRPVFVSPGHLITIDEAVAMVLRTTAGFRLPEPQREADRFAAEIKRKLLAGEAYANTRCKA</sequence>
<reference key="1">
    <citation type="submission" date="2007-05" db="EMBL/GenBank/DDBJ databases">
        <title>Complete sequence of Geobacter uraniireducens Rf4.</title>
        <authorList>
            <consortium name="US DOE Joint Genome Institute"/>
            <person name="Copeland A."/>
            <person name="Lucas S."/>
            <person name="Lapidus A."/>
            <person name="Barry K."/>
            <person name="Detter J.C."/>
            <person name="Glavina del Rio T."/>
            <person name="Hammon N."/>
            <person name="Israni S."/>
            <person name="Dalin E."/>
            <person name="Tice H."/>
            <person name="Pitluck S."/>
            <person name="Chertkov O."/>
            <person name="Brettin T."/>
            <person name="Bruce D."/>
            <person name="Han C."/>
            <person name="Schmutz J."/>
            <person name="Larimer F."/>
            <person name="Land M."/>
            <person name="Hauser L."/>
            <person name="Kyrpides N."/>
            <person name="Mikhailova N."/>
            <person name="Shelobolina E."/>
            <person name="Aklujkar M."/>
            <person name="Lovley D."/>
            <person name="Richardson P."/>
        </authorList>
    </citation>
    <scope>NUCLEOTIDE SEQUENCE [LARGE SCALE GENOMIC DNA]</scope>
    <source>
        <strain>ATCC BAA-1134 / JCM 13001 / Rf4</strain>
    </source>
</reference>
<name>NFI_GEOUR</name>
<comment type="function">
    <text evidence="1">DNA repair enzyme involved in the repair of deaminated bases. Selectively cleaves double-stranded DNA at the second phosphodiester bond 3' to a deoxyinosine leaving behind the intact lesion on the nicked DNA.</text>
</comment>
<comment type="catalytic activity">
    <reaction evidence="1">
        <text>Endonucleolytic cleavage at apurinic or apyrimidinic sites to products with a 5'-phosphate.</text>
        <dbReference type="EC" id="3.1.21.7"/>
    </reaction>
</comment>
<comment type="cofactor">
    <cofactor evidence="1">
        <name>Mg(2+)</name>
        <dbReference type="ChEBI" id="CHEBI:18420"/>
    </cofactor>
</comment>
<comment type="subcellular location">
    <subcellularLocation>
        <location evidence="1">Cytoplasm</location>
    </subcellularLocation>
</comment>
<comment type="similarity">
    <text evidence="1">Belongs to the endonuclease V family.</text>
</comment>
<proteinExistence type="inferred from homology"/>
<feature type="chain" id="PRO_1000083695" description="Endonuclease V">
    <location>
        <begin position="1"/>
        <end position="234"/>
    </location>
</feature>
<feature type="binding site" evidence="1">
    <location>
        <position position="42"/>
    </location>
    <ligand>
        <name>Mg(2+)</name>
        <dbReference type="ChEBI" id="CHEBI:18420"/>
    </ligand>
</feature>
<feature type="binding site" evidence="1">
    <location>
        <position position="108"/>
    </location>
    <ligand>
        <name>Mg(2+)</name>
        <dbReference type="ChEBI" id="CHEBI:18420"/>
    </ligand>
</feature>
<feature type="site" description="Interaction with target DNA" evidence="1">
    <location>
        <position position="78"/>
    </location>
</feature>